<keyword id="KW-0150">Chloroplast</keyword>
<keyword id="KW-0934">Plastid</keyword>
<keyword id="KW-0687">Ribonucleoprotein</keyword>
<keyword id="KW-0689">Ribosomal protein</keyword>
<keyword id="KW-0694">RNA-binding</keyword>
<keyword id="KW-0699">rRNA-binding</keyword>
<organism>
    <name type="scientific">Saccharum hybrid</name>
    <name type="common">Sugarcane</name>
    <dbReference type="NCBI Taxonomy" id="15819"/>
    <lineage>
        <taxon>Eukaryota</taxon>
        <taxon>Viridiplantae</taxon>
        <taxon>Streptophyta</taxon>
        <taxon>Embryophyta</taxon>
        <taxon>Tracheophyta</taxon>
        <taxon>Spermatophyta</taxon>
        <taxon>Magnoliopsida</taxon>
        <taxon>Liliopsida</taxon>
        <taxon>Poales</taxon>
        <taxon>Poaceae</taxon>
        <taxon>PACMAD clade</taxon>
        <taxon>Panicoideae</taxon>
        <taxon>Andropogonodae</taxon>
        <taxon>Andropogoneae</taxon>
        <taxon>Saccharinae</taxon>
        <taxon>Saccharum</taxon>
    </lineage>
</organism>
<comment type="function">
    <text evidence="1">This protein binds specifically to 23S rRNA.</text>
</comment>
<comment type="function">
    <text evidence="1">The globular domain of the protein is located near the polypeptide exit tunnel on the outside of the subunit, while an extended beta-hairpin is found that lines the wall of the exit tunnel in the center of the 70S ribosome.</text>
</comment>
<comment type="subunit">
    <text evidence="1">Part of the 50S ribosomal subunit.</text>
</comment>
<comment type="subcellular location">
    <subcellularLocation>
        <location>Plastid</location>
        <location>Chloroplast</location>
    </subcellularLocation>
</comment>
<comment type="similarity">
    <text evidence="2">Belongs to the universal ribosomal protein uL22 family.</text>
</comment>
<feature type="chain" id="PRO_0000125325" description="Large ribosomal subunit protein uL22c">
    <location>
        <begin position="1"/>
        <end position="148"/>
    </location>
</feature>
<reference key="1">
    <citation type="journal article" date="2004" name="Curr. Genet.">
        <title>Structural features and transcript-editing analysis of sugarcane (Saccharum officinarum L.) chloroplast genome.</title>
        <authorList>
            <person name="Calsa T. Jr."/>
            <person name="Carraro D.M."/>
            <person name="Benatti M.R."/>
            <person name="Barbosa A.C."/>
            <person name="Kitajima J.P."/>
            <person name="Carrer H."/>
        </authorList>
    </citation>
    <scope>NUCLEOTIDE SEQUENCE [LARGE SCALE GENOMIC DNA]</scope>
    <source>
        <strain>cv. SP-80-3280</strain>
    </source>
</reference>
<proteinExistence type="inferred from homology"/>
<sequence>MTSFKLVKYTPRIKKKKGLRKLARKVPTDRLLKFERVFKAQKRIHMSVFKAQRVLDEIRWRYYEETVMILNLMPYRASYPILKLVYSAAANATHYRDFDKTNLFITKAEVSRSTIMKKFRPRARGRSYSIKKTMCNITIVLNIVKKSK</sequence>
<protein>
    <recommendedName>
        <fullName evidence="2">Large ribosomal subunit protein uL22c</fullName>
    </recommendedName>
    <alternativeName>
        <fullName>50S ribosomal protein L22, chloroplastic</fullName>
    </alternativeName>
</protein>
<geneLocation type="chloroplast"/>
<evidence type="ECO:0000250" key="1"/>
<evidence type="ECO:0000305" key="2"/>
<gene>
    <name type="primary">rpl22</name>
    <name type="ordered locus">PS004</name>
</gene>
<name>RK22_SACHY</name>
<dbReference type="EMBL" id="AE009947">
    <property type="protein sequence ID" value="AAT44634.1"/>
    <property type="molecule type" value="Genomic_DNA"/>
</dbReference>
<dbReference type="SMR" id="Q6L3F9"/>
<dbReference type="GO" id="GO:0009507">
    <property type="term" value="C:chloroplast"/>
    <property type="evidence" value="ECO:0007669"/>
    <property type="project" value="UniProtKB-SubCell"/>
</dbReference>
<dbReference type="GO" id="GO:0015934">
    <property type="term" value="C:large ribosomal subunit"/>
    <property type="evidence" value="ECO:0007669"/>
    <property type="project" value="InterPro"/>
</dbReference>
<dbReference type="GO" id="GO:0019843">
    <property type="term" value="F:rRNA binding"/>
    <property type="evidence" value="ECO:0007669"/>
    <property type="project" value="UniProtKB-UniRule"/>
</dbReference>
<dbReference type="GO" id="GO:0003735">
    <property type="term" value="F:structural constituent of ribosome"/>
    <property type="evidence" value="ECO:0007669"/>
    <property type="project" value="InterPro"/>
</dbReference>
<dbReference type="GO" id="GO:0006412">
    <property type="term" value="P:translation"/>
    <property type="evidence" value="ECO:0007669"/>
    <property type="project" value="UniProtKB-UniRule"/>
</dbReference>
<dbReference type="CDD" id="cd00336">
    <property type="entry name" value="Ribosomal_L22"/>
    <property type="match status" value="1"/>
</dbReference>
<dbReference type="FunFam" id="3.90.470.10:FF:000004">
    <property type="entry name" value="50S ribosomal protein L22, chloroplastic"/>
    <property type="match status" value="1"/>
</dbReference>
<dbReference type="Gene3D" id="3.90.470.10">
    <property type="entry name" value="Ribosomal protein L22/L17"/>
    <property type="match status" value="1"/>
</dbReference>
<dbReference type="HAMAP" id="MF_01331_B">
    <property type="entry name" value="Ribosomal_uL22_B"/>
    <property type="match status" value="1"/>
</dbReference>
<dbReference type="InterPro" id="IPR001063">
    <property type="entry name" value="Ribosomal_uL22"/>
</dbReference>
<dbReference type="InterPro" id="IPR005727">
    <property type="entry name" value="Ribosomal_uL22_bac/chlpt-type"/>
</dbReference>
<dbReference type="InterPro" id="IPR047867">
    <property type="entry name" value="Ribosomal_uL22_bac/org-type"/>
</dbReference>
<dbReference type="InterPro" id="IPR018260">
    <property type="entry name" value="Ribosomal_uL22_CS"/>
</dbReference>
<dbReference type="InterPro" id="IPR036394">
    <property type="entry name" value="Ribosomal_uL22_sf"/>
</dbReference>
<dbReference type="NCBIfam" id="TIGR01044">
    <property type="entry name" value="rplV_bact"/>
    <property type="match status" value="1"/>
</dbReference>
<dbReference type="PANTHER" id="PTHR13501">
    <property type="entry name" value="CHLOROPLAST 50S RIBOSOMAL PROTEIN L22-RELATED"/>
    <property type="match status" value="1"/>
</dbReference>
<dbReference type="PANTHER" id="PTHR13501:SF10">
    <property type="entry name" value="LARGE RIBOSOMAL SUBUNIT PROTEIN UL22M"/>
    <property type="match status" value="1"/>
</dbReference>
<dbReference type="Pfam" id="PF00237">
    <property type="entry name" value="Ribosomal_L22"/>
    <property type="match status" value="1"/>
</dbReference>
<dbReference type="SUPFAM" id="SSF54843">
    <property type="entry name" value="Ribosomal protein L22"/>
    <property type="match status" value="1"/>
</dbReference>
<dbReference type="PROSITE" id="PS00464">
    <property type="entry name" value="RIBOSOMAL_L22"/>
    <property type="match status" value="1"/>
</dbReference>
<accession>Q6L3F9</accession>